<feature type="signal peptide" evidence="1">
    <location>
        <begin position="1"/>
        <end position="21"/>
    </location>
</feature>
<feature type="chain" id="PRO_0000035389" description="Cytotoxin I-like P-15">
    <location>
        <begin position="22"/>
        <end position="81"/>
    </location>
</feature>
<feature type="disulfide bond" evidence="2">
    <location>
        <begin position="24"/>
        <end position="42"/>
    </location>
</feature>
<feature type="disulfide bond" evidence="2">
    <location>
        <begin position="35"/>
        <end position="59"/>
    </location>
</feature>
<feature type="disulfide bond" evidence="2">
    <location>
        <begin position="63"/>
        <end position="74"/>
    </location>
</feature>
<feature type="disulfide bond" evidence="2">
    <location>
        <begin position="75"/>
        <end position="80"/>
    </location>
</feature>
<reference key="1">
    <citation type="submission" date="1995-12" db="EMBL/GenBank/DDBJ databases">
        <title>Nucleotide sequence encoding cardiotoxin I-like protein with Thr-15 from Naja naja atra.</title>
        <authorList>
            <person name="Chang L.-S."/>
            <person name="Lin J."/>
            <person name="Wu P.-F."/>
        </authorList>
    </citation>
    <scope>NUCLEOTIDE SEQUENCE [MRNA]</scope>
    <source>
        <tissue>Venom gland</tissue>
    </source>
</reference>
<accession>Q91135</accession>
<name>3SAPF_NAJAT</name>
<keyword id="KW-0123">Cardiotoxin</keyword>
<keyword id="KW-0204">Cytolysis</keyword>
<keyword id="KW-1015">Disulfide bond</keyword>
<keyword id="KW-0472">Membrane</keyword>
<keyword id="KW-0964">Secreted</keyword>
<keyword id="KW-0732">Signal</keyword>
<keyword id="KW-1052">Target cell membrane</keyword>
<keyword id="KW-1053">Target membrane</keyword>
<keyword id="KW-0800">Toxin</keyword>
<evidence type="ECO:0000250" key="1"/>
<evidence type="ECO:0000250" key="2">
    <source>
        <dbReference type="UniProtKB" id="P60301"/>
    </source>
</evidence>
<evidence type="ECO:0000250" key="3">
    <source>
        <dbReference type="UniProtKB" id="P60304"/>
    </source>
</evidence>
<evidence type="ECO:0000305" key="4"/>
<comment type="function">
    <text evidence="2 3">Shows cytolytic activity on many different cells by forming pore in lipid membranes. In vivo, increases heart rate or kills the animal by cardiac arrest. In addition, it binds to heparin with high affinity, interacts with Kv channel-interacting protein 1 (KCNIP1) in a calcium-independent manner, and binds to integrin alpha-V/beta-3 (ITGAV/ITGB3) with moderate affinity.</text>
</comment>
<comment type="subunit">
    <text evidence="2">Monomer in solution; Homodimer and oligomer in the presence of negatively charged lipids forming a pore with a size ranging between 20 and 30 Angstroms.</text>
</comment>
<comment type="subcellular location">
    <subcellularLocation>
        <location evidence="1">Secreted</location>
    </subcellularLocation>
    <subcellularLocation>
        <location evidence="2">Target cell membrane</location>
    </subcellularLocation>
</comment>
<comment type="tissue specificity">
    <text evidence="4">Expressed by the venom gland.</text>
</comment>
<comment type="miscellaneous">
    <text evidence="4">Is classified as a S-type cytotoxin, since a serine residue stands at position 49 (Ser-29 in standard classification).</text>
</comment>
<comment type="similarity">
    <text evidence="4">Belongs to the three-finger toxin family. Short-chain subfamily. Type IA cytotoxin sub-subfamily.</text>
</comment>
<dbReference type="EMBL" id="X94317">
    <property type="protein sequence ID" value="CAA63978.1"/>
    <property type="molecule type" value="mRNA"/>
</dbReference>
<dbReference type="SMR" id="Q91135"/>
<dbReference type="GO" id="GO:0005576">
    <property type="term" value="C:extracellular region"/>
    <property type="evidence" value="ECO:0007669"/>
    <property type="project" value="UniProtKB-SubCell"/>
</dbReference>
<dbReference type="GO" id="GO:0016020">
    <property type="term" value="C:membrane"/>
    <property type="evidence" value="ECO:0007669"/>
    <property type="project" value="UniProtKB-KW"/>
</dbReference>
<dbReference type="GO" id="GO:0044218">
    <property type="term" value="C:other organism cell membrane"/>
    <property type="evidence" value="ECO:0007669"/>
    <property type="project" value="UniProtKB-KW"/>
</dbReference>
<dbReference type="GO" id="GO:0090729">
    <property type="term" value="F:toxin activity"/>
    <property type="evidence" value="ECO:0007669"/>
    <property type="project" value="UniProtKB-KW"/>
</dbReference>
<dbReference type="GO" id="GO:0031640">
    <property type="term" value="P:killing of cells of another organism"/>
    <property type="evidence" value="ECO:0007669"/>
    <property type="project" value="UniProtKB-KW"/>
</dbReference>
<dbReference type="CDD" id="cd00206">
    <property type="entry name" value="TFP_snake_toxin"/>
    <property type="match status" value="1"/>
</dbReference>
<dbReference type="FunFam" id="2.10.60.10:FF:000024">
    <property type="entry name" value="Cytotoxin 1"/>
    <property type="match status" value="1"/>
</dbReference>
<dbReference type="Gene3D" id="2.10.60.10">
    <property type="entry name" value="CD59"/>
    <property type="match status" value="1"/>
</dbReference>
<dbReference type="InterPro" id="IPR003572">
    <property type="entry name" value="Cytotoxin_Cobra"/>
</dbReference>
<dbReference type="InterPro" id="IPR003571">
    <property type="entry name" value="Snake_3FTx"/>
</dbReference>
<dbReference type="InterPro" id="IPR045860">
    <property type="entry name" value="Snake_toxin-like_sf"/>
</dbReference>
<dbReference type="InterPro" id="IPR018354">
    <property type="entry name" value="Snake_toxin_con_site"/>
</dbReference>
<dbReference type="InterPro" id="IPR054131">
    <property type="entry name" value="Toxin_cobra-type"/>
</dbReference>
<dbReference type="Pfam" id="PF21947">
    <property type="entry name" value="Toxin_cobra-type"/>
    <property type="match status" value="1"/>
</dbReference>
<dbReference type="PRINTS" id="PR00282">
    <property type="entry name" value="CYTOTOXIN"/>
</dbReference>
<dbReference type="SUPFAM" id="SSF57302">
    <property type="entry name" value="Snake toxin-like"/>
    <property type="match status" value="1"/>
</dbReference>
<dbReference type="PROSITE" id="PS00272">
    <property type="entry name" value="SNAKE_TOXIN"/>
    <property type="match status" value="1"/>
</dbReference>
<protein>
    <recommendedName>
        <fullName>Cytotoxin I-like P-15</fullName>
    </recommendedName>
    <alternativeName>
        <fullName>Cardiotoxin I-like P-15</fullName>
    </alternativeName>
</protein>
<proteinExistence type="inferred from homology"/>
<organism>
    <name type="scientific">Naja atra</name>
    <name type="common">Chinese cobra</name>
    <dbReference type="NCBI Taxonomy" id="8656"/>
    <lineage>
        <taxon>Eukaryota</taxon>
        <taxon>Metazoa</taxon>
        <taxon>Chordata</taxon>
        <taxon>Craniata</taxon>
        <taxon>Vertebrata</taxon>
        <taxon>Euteleostomi</taxon>
        <taxon>Lepidosauria</taxon>
        <taxon>Squamata</taxon>
        <taxon>Bifurcata</taxon>
        <taxon>Unidentata</taxon>
        <taxon>Episquamata</taxon>
        <taxon>Toxicofera</taxon>
        <taxon>Serpentes</taxon>
        <taxon>Colubroidea</taxon>
        <taxon>Elapidae</taxon>
        <taxon>Elapinae</taxon>
        <taxon>Naja</taxon>
    </lineage>
</organism>
<sequence>MKTLLLTLAAATIVCLDLGYTLKCNKLIPIASKTCPAGMNLCYKMFMMSDLTIPVKRGCIDVCPKNSLLVKYVCCNTDRCN</sequence>